<feature type="chain" id="PRO_0000200581" description="AT-rich interactive domain-containing protein 5B">
    <location>
        <begin position="1"/>
        <end position="1188"/>
    </location>
</feature>
<feature type="domain" description="ARID" evidence="1">
    <location>
        <begin position="318"/>
        <end position="410"/>
    </location>
</feature>
<feature type="region of interest" description="Disordered" evidence="2">
    <location>
        <begin position="251"/>
        <end position="277"/>
    </location>
</feature>
<feature type="region of interest" description="Disordered" evidence="2">
    <location>
        <begin position="412"/>
        <end position="611"/>
    </location>
</feature>
<feature type="region of interest" description="Disordered" evidence="2">
    <location>
        <begin position="846"/>
        <end position="874"/>
    </location>
</feature>
<feature type="region of interest" description="Disordered" evidence="2">
    <location>
        <begin position="891"/>
        <end position="918"/>
    </location>
</feature>
<feature type="region of interest" description="Disordered" evidence="2">
    <location>
        <begin position="956"/>
        <end position="978"/>
    </location>
</feature>
<feature type="region of interest" description="Disordered" evidence="2">
    <location>
        <begin position="1028"/>
        <end position="1070"/>
    </location>
</feature>
<feature type="compositionally biased region" description="Basic and acidic residues" evidence="2">
    <location>
        <begin position="446"/>
        <end position="458"/>
    </location>
</feature>
<feature type="compositionally biased region" description="Polar residues" evidence="2">
    <location>
        <begin position="597"/>
        <end position="609"/>
    </location>
</feature>
<feature type="compositionally biased region" description="Basic and acidic residues" evidence="2">
    <location>
        <begin position="847"/>
        <end position="866"/>
    </location>
</feature>
<feature type="compositionally biased region" description="Basic and acidic residues" evidence="2">
    <location>
        <begin position="1036"/>
        <end position="1055"/>
    </location>
</feature>
<feature type="modified residue" description="Phosphoserine" evidence="14">
    <location>
        <position position="264"/>
    </location>
</feature>
<feature type="modified residue" description="N6,N6-dimethyllysine" evidence="10">
    <location>
        <position position="336"/>
    </location>
</feature>
<feature type="modified residue" description="Phosphoserine" evidence="14 15">
    <location>
        <position position="1032"/>
    </location>
</feature>
<feature type="modified residue" description="Phosphoserine" evidence="14">
    <location>
        <position position="1133"/>
    </location>
</feature>
<feature type="cross-link" description="Glycyl lysine isopeptide (Lys-Gly) (interchain with G-Cter in SUMO2)" evidence="19">
    <location>
        <position position="130"/>
    </location>
</feature>
<feature type="cross-link" description="Glycyl lysine isopeptide (Lys-Gly) (interchain with G-Cter in SUMO2)" evidence="19">
    <location>
        <position position="445"/>
    </location>
</feature>
<feature type="cross-link" description="Glycyl lysine isopeptide (Lys-Gly) (interchain with G-Cter in SUMO2)" evidence="19">
    <location>
        <position position="494"/>
    </location>
</feature>
<feature type="cross-link" description="Glycyl lysine isopeptide (Lys-Gly) (interchain with G-Cter in SUMO2)" evidence="19">
    <location>
        <position position="496"/>
    </location>
</feature>
<feature type="cross-link" description="Glycyl lysine isopeptide (Lys-Gly) (interchain with G-Cter in SUMO2)" evidence="19">
    <location>
        <position position="767"/>
    </location>
</feature>
<feature type="cross-link" description="Glycyl lysine isopeptide (Lys-Gly) (interchain with G-Cter in SUMO2)" evidence="17 19">
    <location>
        <position position="774"/>
    </location>
</feature>
<feature type="cross-link" description="Glycyl lysine isopeptide (Lys-Gly) (interchain with G-Cter in SUMO2)" evidence="16 17 18 19">
    <location>
        <position position="803"/>
    </location>
</feature>
<feature type="cross-link" description="Glycyl lysine isopeptide (Lys-Gly) (interchain with G-Cter in SUMO2)" evidence="19">
    <location>
        <position position="810"/>
    </location>
</feature>
<feature type="cross-link" description="Glycyl lysine isopeptide (Lys-Gly) (interchain with G-Cter in SUMO2)" evidence="19">
    <location>
        <position position="893"/>
    </location>
</feature>
<feature type="cross-link" description="Glycyl lysine isopeptide (Lys-Gly) (interchain with G-Cter in SUMO2)" evidence="19">
    <location>
        <position position="916"/>
    </location>
</feature>
<feature type="cross-link" description="Glycyl lysine isopeptide (Lys-Gly) (interchain with G-Cter in SUMO2)" evidence="19">
    <location>
        <position position="920"/>
    </location>
</feature>
<feature type="cross-link" description="Glycyl lysine isopeptide (Lys-Gly) (interchain with G-Cter in SUMO2)" evidence="19">
    <location>
        <position position="935"/>
    </location>
</feature>
<feature type="cross-link" description="Glycyl lysine isopeptide (Lys-Gly) (interchain with G-Cter in SUMO2)" evidence="19">
    <location>
        <position position="988"/>
    </location>
</feature>
<feature type="cross-link" description="Glycyl lysine isopeptide (Lys-Gly) (interchain with G-Cter in SUMO2)" evidence="19">
    <location>
        <position position="1000"/>
    </location>
</feature>
<feature type="cross-link" description="Glycyl lysine isopeptide (Lys-Gly) (interchain with G-Cter in SUMO2)" evidence="19">
    <location>
        <position position="1013"/>
    </location>
</feature>
<feature type="cross-link" description="Glycyl lysine isopeptide (Lys-Gly) (interchain with G-Cter in SUMO2)" evidence="19">
    <location>
        <position position="1055"/>
    </location>
</feature>
<feature type="cross-link" description="Glycyl lysine isopeptide (Lys-Gly) (interchain with G-Cter in SUMO2)" evidence="19">
    <location>
        <position position="1070"/>
    </location>
</feature>
<feature type="splice variant" id="VSP_009355" description="In isoform 2." evidence="11 12">
    <location>
        <begin position="1"/>
        <end position="243"/>
    </location>
</feature>
<feature type="splice variant" id="VSP_009356" description="In isoform 2." evidence="11 12">
    <original>F</original>
    <variation>M</variation>
    <location>
        <position position="244"/>
    </location>
</feature>
<feature type="splice variant" id="VSP_041560" description="In isoform 3." evidence="13">
    <original>KCEARSALTKPKNNHNCKKVSNEEKPKVAIGEECR</original>
    <variation>RSFTPRYSFRCIFLFLLFLFISLCLCLGGSFQFSI</variation>
    <location>
        <begin position="284"/>
        <end position="318"/>
    </location>
</feature>
<feature type="splice variant" id="VSP_041561" description="In isoform 3." evidence="13">
    <location>
        <begin position="319"/>
        <end position="1188"/>
    </location>
</feature>
<feature type="mutagenesis site" description="Abolishes methylation and FSK-dependent DNA-binding of the PHF2-ARID5B complex to promoters." evidence="10">
    <original>K</original>
    <variation>A</variation>
    <variation>R</variation>
    <location>
        <position position="336"/>
    </location>
</feature>
<feature type="sequence conflict" description="In Ref. 3; AAH15120." evidence="13" ref="3">
    <original>L</original>
    <variation>S</variation>
    <location>
        <position position="401"/>
    </location>
</feature>
<feature type="sequence conflict" description="In Ref. 3; AAH15120." evidence="13" ref="3">
    <original>S</original>
    <variation>N</variation>
    <location>
        <position position="451"/>
    </location>
</feature>
<feature type="sequence conflict" description="In Ref. 5; CAE46013." evidence="13" ref="5">
    <original>F</original>
    <variation>L</variation>
    <location>
        <position position="827"/>
    </location>
</feature>
<feature type="helix" evidence="20">
    <location>
        <begin position="319"/>
        <end position="333"/>
    </location>
</feature>
<feature type="turn" evidence="20">
    <location>
        <begin position="334"/>
        <end position="336"/>
    </location>
</feature>
<feature type="helix" evidence="20">
    <location>
        <begin position="339"/>
        <end position="341"/>
    </location>
</feature>
<feature type="strand" evidence="20">
    <location>
        <begin position="345"/>
        <end position="349"/>
    </location>
</feature>
<feature type="helix" evidence="20">
    <location>
        <begin position="352"/>
        <end position="361"/>
    </location>
</feature>
<feature type="helix" evidence="20">
    <location>
        <begin position="364"/>
        <end position="371"/>
    </location>
</feature>
<feature type="helix" evidence="20">
    <location>
        <begin position="374"/>
        <end position="381"/>
    </location>
</feature>
<feature type="turn" evidence="20">
    <location>
        <begin position="388"/>
        <end position="393"/>
    </location>
</feature>
<feature type="helix" evidence="20">
    <location>
        <begin position="394"/>
        <end position="401"/>
    </location>
</feature>
<feature type="turn" evidence="20">
    <location>
        <begin position="402"/>
        <end position="405"/>
    </location>
</feature>
<feature type="helix" evidence="20">
    <location>
        <begin position="406"/>
        <end position="412"/>
    </location>
</feature>
<feature type="strand" evidence="20">
    <location>
        <begin position="414"/>
        <end position="417"/>
    </location>
</feature>
<reference key="1">
    <citation type="journal article" date="2004" name="Nature">
        <title>The DNA sequence and comparative analysis of human chromosome 10.</title>
        <authorList>
            <person name="Deloukas P."/>
            <person name="Earthrowl M.E."/>
            <person name="Grafham D.V."/>
            <person name="Rubenfield M."/>
            <person name="French L."/>
            <person name="Steward C.A."/>
            <person name="Sims S.K."/>
            <person name="Jones M.C."/>
            <person name="Searle S."/>
            <person name="Scott C."/>
            <person name="Howe K."/>
            <person name="Hunt S.E."/>
            <person name="Andrews T.D."/>
            <person name="Gilbert J.G.R."/>
            <person name="Swarbreck D."/>
            <person name="Ashurst J.L."/>
            <person name="Taylor A."/>
            <person name="Battles J."/>
            <person name="Bird C.P."/>
            <person name="Ainscough R."/>
            <person name="Almeida J.P."/>
            <person name="Ashwell R.I.S."/>
            <person name="Ambrose K.D."/>
            <person name="Babbage A.K."/>
            <person name="Bagguley C.L."/>
            <person name="Bailey J."/>
            <person name="Banerjee R."/>
            <person name="Bates K."/>
            <person name="Beasley H."/>
            <person name="Bray-Allen S."/>
            <person name="Brown A.J."/>
            <person name="Brown J.Y."/>
            <person name="Burford D.C."/>
            <person name="Burrill W."/>
            <person name="Burton J."/>
            <person name="Cahill P."/>
            <person name="Camire D."/>
            <person name="Carter N.P."/>
            <person name="Chapman J.C."/>
            <person name="Clark S.Y."/>
            <person name="Clarke G."/>
            <person name="Clee C.M."/>
            <person name="Clegg S."/>
            <person name="Corby N."/>
            <person name="Coulson A."/>
            <person name="Dhami P."/>
            <person name="Dutta I."/>
            <person name="Dunn M."/>
            <person name="Faulkner L."/>
            <person name="Frankish A."/>
            <person name="Frankland J.A."/>
            <person name="Garner P."/>
            <person name="Garnett J."/>
            <person name="Gribble S."/>
            <person name="Griffiths C."/>
            <person name="Grocock R."/>
            <person name="Gustafson E."/>
            <person name="Hammond S."/>
            <person name="Harley J.L."/>
            <person name="Hart E."/>
            <person name="Heath P.D."/>
            <person name="Ho T.P."/>
            <person name="Hopkins B."/>
            <person name="Horne J."/>
            <person name="Howden P.J."/>
            <person name="Huckle E."/>
            <person name="Hynds C."/>
            <person name="Johnson C."/>
            <person name="Johnson D."/>
            <person name="Kana A."/>
            <person name="Kay M."/>
            <person name="Kimberley A.M."/>
            <person name="Kershaw J.K."/>
            <person name="Kokkinaki M."/>
            <person name="Laird G.K."/>
            <person name="Lawlor S."/>
            <person name="Lee H.M."/>
            <person name="Leongamornlert D.A."/>
            <person name="Laird G."/>
            <person name="Lloyd C."/>
            <person name="Lloyd D.M."/>
            <person name="Loveland J."/>
            <person name="Lovell J."/>
            <person name="McLaren S."/>
            <person name="McLay K.E."/>
            <person name="McMurray A."/>
            <person name="Mashreghi-Mohammadi M."/>
            <person name="Matthews L."/>
            <person name="Milne S."/>
            <person name="Nickerson T."/>
            <person name="Nguyen M."/>
            <person name="Overton-Larty E."/>
            <person name="Palmer S.A."/>
            <person name="Pearce A.V."/>
            <person name="Peck A.I."/>
            <person name="Pelan S."/>
            <person name="Phillimore B."/>
            <person name="Porter K."/>
            <person name="Rice C.M."/>
            <person name="Rogosin A."/>
            <person name="Ross M.T."/>
            <person name="Sarafidou T."/>
            <person name="Sehra H.K."/>
            <person name="Shownkeen R."/>
            <person name="Skuce C.D."/>
            <person name="Smith M."/>
            <person name="Standring L."/>
            <person name="Sycamore N."/>
            <person name="Tester J."/>
            <person name="Thorpe A."/>
            <person name="Torcasso W."/>
            <person name="Tracey A."/>
            <person name="Tromans A."/>
            <person name="Tsolas J."/>
            <person name="Wall M."/>
            <person name="Walsh J."/>
            <person name="Wang H."/>
            <person name="Weinstock K."/>
            <person name="West A.P."/>
            <person name="Willey D.L."/>
            <person name="Whitehead S.L."/>
            <person name="Wilming L."/>
            <person name="Wray P.W."/>
            <person name="Young L."/>
            <person name="Chen Y."/>
            <person name="Lovering R.C."/>
            <person name="Moschonas N.K."/>
            <person name="Siebert R."/>
            <person name="Fechtel K."/>
            <person name="Bentley D."/>
            <person name="Durbin R.M."/>
            <person name="Hubbard T."/>
            <person name="Doucette-Stamm L."/>
            <person name="Beck S."/>
            <person name="Smith D.R."/>
            <person name="Rogers J."/>
        </authorList>
    </citation>
    <scope>NUCLEOTIDE SEQUENCE [LARGE SCALE GENOMIC DNA]</scope>
    <scope>ALTERNATIVE SPLICING</scope>
</reference>
<reference key="2">
    <citation type="journal article" date="2004" name="Nat. Genet.">
        <title>Complete sequencing and characterization of 21,243 full-length human cDNAs.</title>
        <authorList>
            <person name="Ota T."/>
            <person name="Suzuki Y."/>
            <person name="Nishikawa T."/>
            <person name="Otsuki T."/>
            <person name="Sugiyama T."/>
            <person name="Irie R."/>
            <person name="Wakamatsu A."/>
            <person name="Hayashi K."/>
            <person name="Sato H."/>
            <person name="Nagai K."/>
            <person name="Kimura K."/>
            <person name="Makita H."/>
            <person name="Sekine M."/>
            <person name="Obayashi M."/>
            <person name="Nishi T."/>
            <person name="Shibahara T."/>
            <person name="Tanaka T."/>
            <person name="Ishii S."/>
            <person name="Yamamoto J."/>
            <person name="Saito K."/>
            <person name="Kawai Y."/>
            <person name="Isono Y."/>
            <person name="Nakamura Y."/>
            <person name="Nagahari K."/>
            <person name="Murakami K."/>
            <person name="Yasuda T."/>
            <person name="Iwayanagi T."/>
            <person name="Wagatsuma M."/>
            <person name="Shiratori A."/>
            <person name="Sudo H."/>
            <person name="Hosoiri T."/>
            <person name="Kaku Y."/>
            <person name="Kodaira H."/>
            <person name="Kondo H."/>
            <person name="Sugawara M."/>
            <person name="Takahashi M."/>
            <person name="Kanda K."/>
            <person name="Yokoi T."/>
            <person name="Furuya T."/>
            <person name="Kikkawa E."/>
            <person name="Omura Y."/>
            <person name="Abe K."/>
            <person name="Kamihara K."/>
            <person name="Katsuta N."/>
            <person name="Sato K."/>
            <person name="Tanikawa M."/>
            <person name="Yamazaki M."/>
            <person name="Ninomiya K."/>
            <person name="Ishibashi T."/>
            <person name="Yamashita H."/>
            <person name="Murakawa K."/>
            <person name="Fujimori K."/>
            <person name="Tanai H."/>
            <person name="Kimata M."/>
            <person name="Watanabe M."/>
            <person name="Hiraoka S."/>
            <person name="Chiba Y."/>
            <person name="Ishida S."/>
            <person name="Ono Y."/>
            <person name="Takiguchi S."/>
            <person name="Watanabe S."/>
            <person name="Yosida M."/>
            <person name="Hotuta T."/>
            <person name="Kusano J."/>
            <person name="Kanehori K."/>
            <person name="Takahashi-Fujii A."/>
            <person name="Hara H."/>
            <person name="Tanase T.-O."/>
            <person name="Nomura Y."/>
            <person name="Togiya S."/>
            <person name="Komai F."/>
            <person name="Hara R."/>
            <person name="Takeuchi K."/>
            <person name="Arita M."/>
            <person name="Imose N."/>
            <person name="Musashino K."/>
            <person name="Yuuki H."/>
            <person name="Oshima A."/>
            <person name="Sasaki N."/>
            <person name="Aotsuka S."/>
            <person name="Yoshikawa Y."/>
            <person name="Matsunawa H."/>
            <person name="Ichihara T."/>
            <person name="Shiohata N."/>
            <person name="Sano S."/>
            <person name="Moriya S."/>
            <person name="Momiyama H."/>
            <person name="Satoh N."/>
            <person name="Takami S."/>
            <person name="Terashima Y."/>
            <person name="Suzuki O."/>
            <person name="Nakagawa S."/>
            <person name="Senoh A."/>
            <person name="Mizoguchi H."/>
            <person name="Goto Y."/>
            <person name="Shimizu F."/>
            <person name="Wakebe H."/>
            <person name="Hishigaki H."/>
            <person name="Watanabe T."/>
            <person name="Sugiyama A."/>
            <person name="Takemoto M."/>
            <person name="Kawakami B."/>
            <person name="Yamazaki M."/>
            <person name="Watanabe K."/>
            <person name="Kumagai A."/>
            <person name="Itakura S."/>
            <person name="Fukuzumi Y."/>
            <person name="Fujimori Y."/>
            <person name="Komiyama M."/>
            <person name="Tashiro H."/>
            <person name="Tanigami A."/>
            <person name="Fujiwara T."/>
            <person name="Ono T."/>
            <person name="Yamada K."/>
            <person name="Fujii Y."/>
            <person name="Ozaki K."/>
            <person name="Hirao M."/>
            <person name="Ohmori Y."/>
            <person name="Kawabata A."/>
            <person name="Hikiji T."/>
            <person name="Kobatake N."/>
            <person name="Inagaki H."/>
            <person name="Ikema Y."/>
            <person name="Okamoto S."/>
            <person name="Okitani R."/>
            <person name="Kawakami T."/>
            <person name="Noguchi S."/>
            <person name="Itoh T."/>
            <person name="Shigeta K."/>
            <person name="Senba T."/>
            <person name="Matsumura K."/>
            <person name="Nakajima Y."/>
            <person name="Mizuno T."/>
            <person name="Morinaga M."/>
            <person name="Sasaki M."/>
            <person name="Togashi T."/>
            <person name="Oyama M."/>
            <person name="Hata H."/>
            <person name="Watanabe M."/>
            <person name="Komatsu T."/>
            <person name="Mizushima-Sugano J."/>
            <person name="Satoh T."/>
            <person name="Shirai Y."/>
            <person name="Takahashi Y."/>
            <person name="Nakagawa K."/>
            <person name="Okumura K."/>
            <person name="Nagase T."/>
            <person name="Nomura N."/>
            <person name="Kikuchi H."/>
            <person name="Masuho Y."/>
            <person name="Yamashita R."/>
            <person name="Nakai K."/>
            <person name="Yada T."/>
            <person name="Nakamura Y."/>
            <person name="Ohara O."/>
            <person name="Isogai T."/>
            <person name="Sugano S."/>
        </authorList>
    </citation>
    <scope>NUCLEOTIDE SEQUENCE [LARGE SCALE MRNA] OF 1-453 (ISOFORM 2)</scope>
    <source>
        <tissue>Smooth muscle</tissue>
        <tissue>Tongue</tissue>
    </source>
</reference>
<reference key="3">
    <citation type="journal article" date="2004" name="Genome Res.">
        <title>The status, quality, and expansion of the NIH full-length cDNA project: the Mammalian Gene Collection (MGC).</title>
        <authorList>
            <consortium name="The MGC Project Team"/>
        </authorList>
    </citation>
    <scope>NUCLEOTIDE SEQUENCE [LARGE SCALE MRNA] OF 1-450 AND 477-1188 (ISOFORM 1)</scope>
    <scope>NUCLEOTIDE SEQUENCE [LARGE SCALE MRNA] OF 1-453 (ISOFORM 2)</scope>
    <source>
        <tissue>Placenta</tissue>
        <tissue>Uterus</tissue>
    </source>
</reference>
<reference key="4">
    <citation type="submission" date="1992-02" db="EMBL/GenBank/DDBJ databases">
        <title>A new family of DNA binding factors contain a member responsive to retinoic acid.</title>
        <authorList>
            <person name="Merrills B.W."/>
            <person name="Huang T.H."/>
            <person name="Oka T."/>
            <person name="LeBon T.R."/>
            <person name="Gertson P.N."/>
            <person name="Itakura K."/>
        </authorList>
    </citation>
    <scope>NUCLEOTIDE SEQUENCE [MRNA] OF 302-547</scope>
    <source>
        <tissue>Foreskin</tissue>
    </source>
</reference>
<reference key="5">
    <citation type="journal article" date="2007" name="BMC Genomics">
        <title>The full-ORF clone resource of the German cDNA consortium.</title>
        <authorList>
            <person name="Bechtel S."/>
            <person name="Rosenfelder H."/>
            <person name="Duda A."/>
            <person name="Schmidt C.P."/>
            <person name="Ernst U."/>
            <person name="Wellenreuther R."/>
            <person name="Mehrle A."/>
            <person name="Schuster C."/>
            <person name="Bahr A."/>
            <person name="Bloecker H."/>
            <person name="Heubner D."/>
            <person name="Hoerlein A."/>
            <person name="Michel G."/>
            <person name="Wedler H."/>
            <person name="Koehrer K."/>
            <person name="Ottenwaelder B."/>
            <person name="Poustka A."/>
            <person name="Wiemann S."/>
            <person name="Schupp I."/>
        </authorList>
    </citation>
    <scope>NUCLEOTIDE SEQUENCE [LARGE SCALE MRNA] OF 587-1188</scope>
    <source>
        <tissue>Colon endothelium</tissue>
        <tissue>Fetal kidney</tissue>
    </source>
</reference>
<reference key="6">
    <citation type="journal article" date="1999" name="Biochem. Biophys. Res. Commun.">
        <title>The novel Mrf-2 DNA-binding domain recognizes a five-base core sequence through major and minor-groove contacts.</title>
        <authorList>
            <person name="Whitson R.H."/>
            <person name="Huang T."/>
            <person name="Itakura K."/>
        </authorList>
    </citation>
    <scope>DNA-BINDING</scope>
</reference>
<reference key="7">
    <citation type="journal article" date="2005" name="Nucleic Acids Res.">
        <title>DNA-binding properties of ARID family proteins.</title>
        <authorList>
            <person name="Patsialou A."/>
            <person name="Wilsker D."/>
            <person name="Moran E."/>
        </authorList>
    </citation>
    <scope>DNA-BINDING</scope>
</reference>
<reference key="8">
    <citation type="journal article" date="2008" name="Int. Heart J.">
        <title>Genetic variations of Mrf-2/ARID5B confer risk of coronary atherosclerosis in the Japanese population.</title>
        <authorList>
            <person name="Wang G."/>
            <person name="Watanabe M."/>
            <person name="Imai Y."/>
            <person name="Hara K."/>
            <person name="Manabe I."/>
            <person name="Maemura K."/>
            <person name="Horikoshi M."/>
            <person name="Kohro T."/>
            <person name="Amiya E."/>
            <person name="Sugiyama T."/>
            <person name="Fujita T."/>
            <person name="Kadowaki T."/>
            <person name="Yamazaki T."/>
            <person name="Nagai R."/>
        </authorList>
    </citation>
    <scope>POSSIBLE INVOLVEMENT IN CORONARY ATHEROSCLEROSIS</scope>
</reference>
<reference key="9">
    <citation type="journal article" date="2009" name="Nat. Genet.">
        <title>Germline genomic variants associated with childhood acute lymphoblastic leukemia.</title>
        <authorList>
            <person name="Trevino L.R."/>
            <person name="Yang W."/>
            <person name="French D."/>
            <person name="Hunger S.P."/>
            <person name="Carroll W.L."/>
            <person name="Devidas M."/>
            <person name="Willman C."/>
            <person name="Neale G."/>
            <person name="Downing J."/>
            <person name="Raimondi S.C."/>
            <person name="Pui C.H."/>
            <person name="Evans W.E."/>
            <person name="Relling M.V."/>
        </authorList>
    </citation>
    <scope>POSSIBLE INVOLVEMENT IN ALL</scope>
</reference>
<reference key="10">
    <citation type="journal article" date="2009" name="Nat. Genet.">
        <title>Loci on 7p12.2, 10q21.2 and 14q11.2 are associated with risk of childhood acute lymphoblastic leukemia.</title>
        <authorList>
            <person name="Papaemmanuil E."/>
            <person name="Hosking F.J."/>
            <person name="Vijayakrishnan J."/>
            <person name="Price A."/>
            <person name="Olver B."/>
            <person name="Sheridan E."/>
            <person name="Kinsey S.E."/>
            <person name="Lightfoot T."/>
            <person name="Roman E."/>
            <person name="Irving J.A."/>
            <person name="Allan J.M."/>
            <person name="Tomlinson I.P."/>
            <person name="Taylor M."/>
            <person name="Greaves M."/>
            <person name="Houlston R.S."/>
        </authorList>
    </citation>
    <scope>POSSIBLE INVOLVEMENT IN ALL</scope>
</reference>
<reference key="11">
    <citation type="journal article" date="2010" name="Blood">
        <title>Verification of the susceptibility loci on 7p12.2, 10q21.2, and 14q11.2 in precursor B-cell acute lymphoblastic leukemia of childhood.</title>
        <authorList>
            <person name="Prasad R.B."/>
            <person name="Hosking F.J."/>
            <person name="Vijayakrishnan J."/>
            <person name="Papaemmanuil E."/>
            <person name="Koehler R."/>
            <person name="Greaves M."/>
            <person name="Sheridan E."/>
            <person name="Gast A."/>
            <person name="Kinsey S.E."/>
            <person name="Lightfoot T."/>
            <person name="Roman E."/>
            <person name="Taylor M."/>
            <person name="Pritchard-Jones K."/>
            <person name="Stanulla M."/>
            <person name="Schrappe M."/>
            <person name="Bartram C.R."/>
            <person name="Houlston R.S."/>
            <person name="Kumar R."/>
            <person name="Hemminki K."/>
        </authorList>
    </citation>
    <scope>POSSIBLE INVOLVEMENT IN ALL</scope>
</reference>
<reference key="12">
    <citation type="journal article" date="2010" name="Haematologica">
        <title>Replication analysis confirms the association of ARID5B with childhood B-cell acute lymphoblastic leukemia.</title>
        <authorList>
            <person name="Healy J."/>
            <person name="Richer C."/>
            <person name="Bourgey M."/>
            <person name="Kritikou E.A."/>
            <person name="Sinnett D."/>
        </authorList>
    </citation>
    <scope>POSSIBLE INVOLVEMENT IN ALL</scope>
</reference>
<reference key="13">
    <citation type="journal article" date="2010" name="Leukemia">
        <title>ARID5B SNP rs10821936 is associated with risk of childhood acute lymphoblastic leukemia in blacks and contributes to racial differences in leukemia incidence.</title>
        <authorList>
            <person name="Yang W."/>
            <person name="Trevino L.R."/>
            <person name="Yang J.J."/>
            <person name="Scheet P."/>
            <person name="Pui C.H."/>
            <person name="Evans W.E."/>
            <person name="Relling M.V."/>
        </authorList>
    </citation>
    <scope>POSSIBLE INVOLVEMENT IN ALL</scope>
</reference>
<reference key="14">
    <citation type="journal article" date="2010" name="Leuk. Res.">
        <title>Genome-wide association study of childhood acute lymphoblastic leukemia in Korea.</title>
        <authorList>
            <person name="Han S."/>
            <person name="Lee K.M."/>
            <person name="Park S.K."/>
            <person name="Lee J.E."/>
            <person name="Ahn H.S."/>
            <person name="Shin H.Y."/>
            <person name="Kang H.J."/>
            <person name="Koo H.H."/>
            <person name="Seo J.J."/>
            <person name="Choi J.E."/>
            <person name="Ahn Y.O."/>
            <person name="Kang D."/>
        </authorList>
    </citation>
    <scope>POSSIBLE INVOLVEMENT IN ALL</scope>
</reference>
<reference key="15">
    <citation type="journal article" date="2010" name="Proc. Natl. Acad. Sci. U.S.A.">
        <title>Genetic landscape of high hyperdiploid childhood acute lymphoblastic leukemia.</title>
        <authorList>
            <person name="Paulsson K."/>
            <person name="Forestier E."/>
            <person name="Lilljebjorn H."/>
            <person name="Heldrup J."/>
            <person name="Behrendtz M."/>
            <person name="Young B.D."/>
            <person name="Johansson B."/>
        </authorList>
    </citation>
    <scope>POSSIBLE INVOLVEMENT IN ALL</scope>
</reference>
<reference key="16">
    <citation type="journal article" date="2011" name="Nat. Cell Biol.">
        <title>PKA-dependent regulation of the histone lysine demethylase complex PHF2-ARID5B.</title>
        <authorList>
            <person name="Baba A."/>
            <person name="Ohtake F."/>
            <person name="Okuno Y."/>
            <person name="Yokota K."/>
            <person name="Okada M."/>
            <person name="Imai Y."/>
            <person name="Ni M."/>
            <person name="Meyer C.A."/>
            <person name="Igarashi K."/>
            <person name="Kanno J."/>
            <person name="Brown M."/>
            <person name="Kato S."/>
        </authorList>
    </citation>
    <scope>FUNCTION</scope>
    <scope>INTERACTION WITH PHF2</scope>
    <scope>IDENTIFICATION BY MASS SPECTROMETRY</scope>
    <scope>TISSUE SPECIFICITY</scope>
    <scope>DNA-BINDING</scope>
    <scope>IDENTIFICATION IN THE PHF2-ARID5B COMPLEX</scope>
    <scope>METHYLATION AT LYS-336</scope>
    <scope>MUTAGENESIS OF LYS-336</scope>
</reference>
<reference key="17">
    <citation type="journal article" date="2013" name="J. Proteome Res.">
        <title>Toward a comprehensive characterization of a human cancer cell phosphoproteome.</title>
        <authorList>
            <person name="Zhou H."/>
            <person name="Di Palma S."/>
            <person name="Preisinger C."/>
            <person name="Peng M."/>
            <person name="Polat A.N."/>
            <person name="Heck A.J."/>
            <person name="Mohammed S."/>
        </authorList>
    </citation>
    <scope>PHOSPHORYLATION [LARGE SCALE ANALYSIS] AT SER-264; SER-1032 AND SER-1133</scope>
    <scope>IDENTIFICATION BY MASS SPECTROMETRY [LARGE SCALE ANALYSIS]</scope>
    <source>
        <tissue>Cervix carcinoma</tissue>
    </source>
</reference>
<reference key="18">
    <citation type="journal article" date="2014" name="J. Proteomics">
        <title>An enzyme assisted RP-RPLC approach for in-depth analysis of human liver phosphoproteome.</title>
        <authorList>
            <person name="Bian Y."/>
            <person name="Song C."/>
            <person name="Cheng K."/>
            <person name="Dong M."/>
            <person name="Wang F."/>
            <person name="Huang J."/>
            <person name="Sun D."/>
            <person name="Wang L."/>
            <person name="Ye M."/>
            <person name="Zou H."/>
        </authorList>
    </citation>
    <scope>PHOSPHORYLATION [LARGE SCALE ANALYSIS] AT SER-1032</scope>
    <scope>IDENTIFICATION BY MASS SPECTROMETRY [LARGE SCALE ANALYSIS]</scope>
    <source>
        <tissue>Liver</tissue>
    </source>
</reference>
<reference key="19">
    <citation type="journal article" date="2014" name="Nat. Struct. Mol. Biol.">
        <title>Uncovering global SUMOylation signaling networks in a site-specific manner.</title>
        <authorList>
            <person name="Hendriks I.A."/>
            <person name="D'Souza R.C."/>
            <person name="Yang B."/>
            <person name="Verlaan-de Vries M."/>
            <person name="Mann M."/>
            <person name="Vertegaal A.C."/>
        </authorList>
    </citation>
    <scope>SUMOYLATION [LARGE SCALE ANALYSIS] AT LYS-803</scope>
    <scope>IDENTIFICATION BY MASS SPECTROMETRY [LARGE SCALE ANALYSIS]</scope>
</reference>
<reference key="20">
    <citation type="journal article" date="2015" name="Cell Rep.">
        <title>SUMO-2 orchestrates chromatin modifiers in response to DNA damage.</title>
        <authorList>
            <person name="Hendriks I.A."/>
            <person name="Treffers L.W."/>
            <person name="Verlaan-de Vries M."/>
            <person name="Olsen J.V."/>
            <person name="Vertegaal A.C."/>
        </authorList>
    </citation>
    <scope>SUMOYLATION [LARGE SCALE ANALYSIS] AT LYS-803</scope>
    <scope>IDENTIFICATION BY MASS SPECTROMETRY [LARGE SCALE ANALYSIS]</scope>
</reference>
<reference key="21">
    <citation type="journal article" date="2015" name="Mol. Cell. Proteomics">
        <title>System-wide analysis of SUMOylation dynamics in response to replication stress reveals novel small ubiquitin-like modified target proteins and acceptor lysines relevant for genome stability.</title>
        <authorList>
            <person name="Xiao Z."/>
            <person name="Chang J.G."/>
            <person name="Hendriks I.A."/>
            <person name="Sigurdsson J.O."/>
            <person name="Olsen J.V."/>
            <person name="Vertegaal A.C."/>
        </authorList>
    </citation>
    <scope>SUMOYLATION [LARGE SCALE ANALYSIS] AT LYS-774 AND LYS-803</scope>
    <scope>IDENTIFICATION BY MASS SPECTROMETRY [LARGE SCALE ANALYSIS]</scope>
</reference>
<reference key="22">
    <citation type="journal article" date="2017" name="Nat. Struct. Mol. Biol.">
        <title>Site-specific mapping of the human SUMO proteome reveals co-modification with phosphorylation.</title>
        <authorList>
            <person name="Hendriks I.A."/>
            <person name="Lyon D."/>
            <person name="Young C."/>
            <person name="Jensen L.J."/>
            <person name="Vertegaal A.C."/>
            <person name="Nielsen M.L."/>
        </authorList>
    </citation>
    <scope>SUMOYLATION [LARGE SCALE ANALYSIS] AT LYS-130; LYS-445; LYS-494; LYS-496; LYS-767; LYS-774; LYS-803; LYS-810; LYS-893; LYS-916; LYS-920; LYS-935; LYS-988; LYS-1000; LYS-1013; LYS-1055 AND LYS-1070</scope>
    <scope>IDENTIFICATION BY MASS SPECTROMETRY [LARGE SCALE ANALYSIS]</scope>
</reference>
<reference key="23">
    <citation type="journal article" date="1998" name="Nat. Struct. Biol.">
        <title>A novel DNA-binding motif shares structural homology to DNA replication and repair nucleases and polymerases.</title>
        <authorList>
            <person name="Yuan Y.-C."/>
            <person name="Whitson R.H."/>
            <person name="Liu Q."/>
            <person name="Itakura K."/>
            <person name="Chen Y."/>
        </authorList>
    </citation>
    <scope>STRUCTURE BY NMR OF 318-417</scope>
</reference>
<reference key="24">
    <citation type="journal article" date="2001" name="Biochemistry">
        <title>Dynamics of the Mrf-2 DNA-binding domain free and in complex with DNA.</title>
        <authorList>
            <person name="Zhu L."/>
            <person name="Hu J."/>
            <person name="Lin D."/>
            <person name="Whitson R."/>
            <person name="Itakura K."/>
            <person name="Chen Y."/>
        </authorList>
    </citation>
    <scope>STRUCTURE BY NMR OF 318-417 IN COMPLEX WITH DNA</scope>
</reference>
<reference key="25">
    <citation type="journal article" date="2007" name="Biochemistry">
        <title>Determination of the three-dimensional structure of the Mrf2-DNA complex using paramagnetic spin labeling.</title>
        <authorList>
            <person name="Cai S."/>
            <person name="Zhu L."/>
            <person name="Zhang Z."/>
            <person name="Chen Y."/>
        </authorList>
    </citation>
    <scope>STRUCTURE BY NMR OF 318-417 IN COMPLEX WITH DNA</scope>
</reference>
<accession>Q14865</accession>
<accession>B4DLB3</accession>
<accession>Q05DG6</accession>
<accession>Q32Q59</accession>
<accession>Q5VST4</accession>
<accession>Q6NZ42</accession>
<accession>Q7Z3M4</accession>
<accession>Q8N421</accession>
<accession>Q9H786</accession>
<evidence type="ECO:0000255" key="1">
    <source>
        <dbReference type="PROSITE-ProRule" id="PRU00355"/>
    </source>
</evidence>
<evidence type="ECO:0000256" key="2">
    <source>
        <dbReference type="SAM" id="MobiDB-lite"/>
    </source>
</evidence>
<evidence type="ECO:0000269" key="3">
    <source>
    </source>
</evidence>
<evidence type="ECO:0000269" key="4">
    <source>
    </source>
</evidence>
<evidence type="ECO:0000269" key="5">
    <source>
    </source>
</evidence>
<evidence type="ECO:0000269" key="6">
    <source>
    </source>
</evidence>
<evidence type="ECO:0000269" key="7">
    <source>
    </source>
</evidence>
<evidence type="ECO:0000269" key="8">
    <source>
    </source>
</evidence>
<evidence type="ECO:0000269" key="9">
    <source>
    </source>
</evidence>
<evidence type="ECO:0000269" key="10">
    <source>
    </source>
</evidence>
<evidence type="ECO:0000303" key="11">
    <source>
    </source>
</evidence>
<evidence type="ECO:0000303" key="12">
    <source>
    </source>
</evidence>
<evidence type="ECO:0000305" key="13"/>
<evidence type="ECO:0007744" key="14">
    <source>
    </source>
</evidence>
<evidence type="ECO:0007744" key="15">
    <source>
    </source>
</evidence>
<evidence type="ECO:0007744" key="16">
    <source>
    </source>
</evidence>
<evidence type="ECO:0007744" key="17">
    <source>
    </source>
</evidence>
<evidence type="ECO:0007744" key="18">
    <source>
    </source>
</evidence>
<evidence type="ECO:0007744" key="19">
    <source>
    </source>
</evidence>
<evidence type="ECO:0007829" key="20">
    <source>
        <dbReference type="PDB" id="1IG6"/>
    </source>
</evidence>
<name>ARI5B_HUMAN</name>
<dbReference type="EMBL" id="AC067742">
    <property type="status" value="NOT_ANNOTATED_CDS"/>
    <property type="molecule type" value="Genomic_DNA"/>
</dbReference>
<dbReference type="EMBL" id="AL671972">
    <property type="status" value="NOT_ANNOTATED_CDS"/>
    <property type="molecule type" value="Genomic_DNA"/>
</dbReference>
<dbReference type="EMBL" id="AK024803">
    <property type="protein sequence ID" value="BAB15012.1"/>
    <property type="status" value="ALT_SEQ"/>
    <property type="molecule type" value="mRNA"/>
</dbReference>
<dbReference type="EMBL" id="AK296921">
    <property type="protein sequence ID" value="BAG59475.1"/>
    <property type="molecule type" value="mRNA"/>
</dbReference>
<dbReference type="EMBL" id="BC015120">
    <property type="protein sequence ID" value="AAH15120.1"/>
    <property type="status" value="ALT_SEQ"/>
    <property type="molecule type" value="mRNA"/>
</dbReference>
<dbReference type="EMBL" id="BC036831">
    <property type="protein sequence ID" value="AAH36831.1"/>
    <property type="status" value="ALT_INIT"/>
    <property type="molecule type" value="mRNA"/>
</dbReference>
<dbReference type="EMBL" id="BC066345">
    <property type="protein sequence ID" value="AAH66345.1"/>
    <property type="status" value="ALT_SEQ"/>
    <property type="molecule type" value="mRNA"/>
</dbReference>
<dbReference type="EMBL" id="BC107800">
    <property type="protein sequence ID" value="AAI07801.1"/>
    <property type="status" value="ALT_SEQ"/>
    <property type="molecule type" value="mRNA"/>
</dbReference>
<dbReference type="EMBL" id="M73837">
    <property type="protein sequence ID" value="AAA59870.1"/>
    <property type="molecule type" value="mRNA"/>
</dbReference>
<dbReference type="EMBL" id="BX537690">
    <property type="protein sequence ID" value="CAD97814.1"/>
    <property type="molecule type" value="mRNA"/>
</dbReference>
<dbReference type="EMBL" id="BX641020">
    <property type="protein sequence ID" value="CAE46013.1"/>
    <property type="molecule type" value="mRNA"/>
</dbReference>
<dbReference type="CCDS" id="CCDS31208.1">
    <molecule id="Q14865-1"/>
</dbReference>
<dbReference type="CCDS" id="CCDS58082.1">
    <molecule id="Q14865-2"/>
</dbReference>
<dbReference type="PIR" id="S27963">
    <property type="entry name" value="S27963"/>
</dbReference>
<dbReference type="RefSeq" id="NP_001231567.1">
    <molecule id="Q14865-2"/>
    <property type="nucleotide sequence ID" value="NM_001244638.2"/>
</dbReference>
<dbReference type="RefSeq" id="NP_115575.1">
    <molecule id="Q14865-1"/>
    <property type="nucleotide sequence ID" value="NM_032199.3"/>
</dbReference>
<dbReference type="PDB" id="1IG6">
    <property type="method" value="NMR"/>
    <property type="chains" value="A=318-424"/>
</dbReference>
<dbReference type="PDB" id="2OEH">
    <property type="method" value="NMR"/>
    <property type="chains" value="A=318-424"/>
</dbReference>
<dbReference type="PDBsum" id="1IG6"/>
<dbReference type="PDBsum" id="2OEH"/>
<dbReference type="BMRB" id="Q14865"/>
<dbReference type="SMR" id="Q14865"/>
<dbReference type="BioGRID" id="123918">
    <property type="interactions" value="74"/>
</dbReference>
<dbReference type="ComplexPortal" id="CPX-7861">
    <property type="entry name" value="PHF2-ARID5B histone lysine demethylase complex"/>
</dbReference>
<dbReference type="FunCoup" id="Q14865">
    <property type="interactions" value="3078"/>
</dbReference>
<dbReference type="IntAct" id="Q14865">
    <property type="interactions" value="44"/>
</dbReference>
<dbReference type="MINT" id="Q14865"/>
<dbReference type="STRING" id="9606.ENSP00000279873"/>
<dbReference type="GlyGen" id="Q14865">
    <property type="glycosylation" value="5 sites, 1 O-linked glycan (3 sites)"/>
</dbReference>
<dbReference type="iPTMnet" id="Q14865"/>
<dbReference type="PhosphoSitePlus" id="Q14865"/>
<dbReference type="SwissPalm" id="Q14865"/>
<dbReference type="BioMuta" id="ARID5B"/>
<dbReference type="DMDM" id="209572763"/>
<dbReference type="jPOST" id="Q14865"/>
<dbReference type="MassIVE" id="Q14865"/>
<dbReference type="PaxDb" id="9606-ENSP00000279873"/>
<dbReference type="PeptideAtlas" id="Q14865"/>
<dbReference type="ProteomicsDB" id="60211">
    <molecule id="Q14865-1"/>
</dbReference>
<dbReference type="ProteomicsDB" id="60212">
    <molecule id="Q14865-2"/>
</dbReference>
<dbReference type="ProteomicsDB" id="60213">
    <molecule id="Q14865-3"/>
</dbReference>
<dbReference type="Antibodypedia" id="2974">
    <property type="antibodies" value="121 antibodies from 22 providers"/>
</dbReference>
<dbReference type="DNASU" id="84159"/>
<dbReference type="Ensembl" id="ENST00000279873.12">
    <molecule id="Q14865-1"/>
    <property type="protein sequence ID" value="ENSP00000279873.7"/>
    <property type="gene ID" value="ENSG00000150347.17"/>
</dbReference>
<dbReference type="Ensembl" id="ENST00000309334.5">
    <molecule id="Q14865-2"/>
    <property type="protein sequence ID" value="ENSP00000308862.5"/>
    <property type="gene ID" value="ENSG00000150347.17"/>
</dbReference>
<dbReference type="GeneID" id="84159"/>
<dbReference type="KEGG" id="hsa:84159"/>
<dbReference type="MANE-Select" id="ENST00000279873.12">
    <property type="protein sequence ID" value="ENSP00000279873.7"/>
    <property type="RefSeq nucleotide sequence ID" value="NM_032199.3"/>
    <property type="RefSeq protein sequence ID" value="NP_115575.1"/>
</dbReference>
<dbReference type="UCSC" id="uc001jlt.3">
    <molecule id="Q14865-1"/>
    <property type="organism name" value="human"/>
</dbReference>
<dbReference type="AGR" id="HGNC:17362"/>
<dbReference type="CTD" id="84159"/>
<dbReference type="DisGeNET" id="84159"/>
<dbReference type="GeneCards" id="ARID5B"/>
<dbReference type="HGNC" id="HGNC:17362">
    <property type="gene designation" value="ARID5B"/>
</dbReference>
<dbReference type="HPA" id="ENSG00000150347">
    <property type="expression patterns" value="Tissue enhanced (skeletal)"/>
</dbReference>
<dbReference type="MalaCards" id="ARID5B"/>
<dbReference type="MIM" id="608538">
    <property type="type" value="gene"/>
</dbReference>
<dbReference type="MIM" id="613065">
    <property type="type" value="phenotype"/>
</dbReference>
<dbReference type="neXtProt" id="NX_Q14865"/>
<dbReference type="OpenTargets" id="ENSG00000150347"/>
<dbReference type="PharmGKB" id="PA134943193"/>
<dbReference type="VEuPathDB" id="HostDB:ENSG00000150347"/>
<dbReference type="eggNOG" id="KOG2744">
    <property type="taxonomic scope" value="Eukaryota"/>
</dbReference>
<dbReference type="GeneTree" id="ENSGT00940000161078"/>
<dbReference type="HOGENOM" id="CLU_007985_0_0_1"/>
<dbReference type="InParanoid" id="Q14865"/>
<dbReference type="OMA" id="KAEGYQD"/>
<dbReference type="OrthoDB" id="1938591at2759"/>
<dbReference type="PAN-GO" id="Q14865">
    <property type="GO annotations" value="3 GO annotations based on evolutionary models"/>
</dbReference>
<dbReference type="PhylomeDB" id="Q14865"/>
<dbReference type="TreeFam" id="TF324725"/>
<dbReference type="PathwayCommons" id="Q14865"/>
<dbReference type="Reactome" id="R-HSA-3214842">
    <property type="pathway name" value="HDMs demethylate histones"/>
</dbReference>
<dbReference type="SignaLink" id="Q14865"/>
<dbReference type="SIGNOR" id="Q14865"/>
<dbReference type="BioGRID-ORCS" id="84159">
    <property type="hits" value="39 hits in 1192 CRISPR screens"/>
</dbReference>
<dbReference type="ChiTaRS" id="ARID5B">
    <property type="organism name" value="human"/>
</dbReference>
<dbReference type="EvolutionaryTrace" id="Q14865"/>
<dbReference type="GeneWiki" id="ARID5B"/>
<dbReference type="GenomeRNAi" id="84159"/>
<dbReference type="Pharos" id="Q14865">
    <property type="development level" value="Tbio"/>
</dbReference>
<dbReference type="PRO" id="PR:Q14865"/>
<dbReference type="Proteomes" id="UP000005640">
    <property type="component" value="Chromosome 10"/>
</dbReference>
<dbReference type="RNAct" id="Q14865">
    <property type="molecule type" value="protein"/>
</dbReference>
<dbReference type="Bgee" id="ENSG00000150347">
    <property type="expression patterns" value="Expressed in type B pancreatic cell and 217 other cell types or tissues"/>
</dbReference>
<dbReference type="ExpressionAtlas" id="Q14865">
    <property type="expression patterns" value="baseline and differential"/>
</dbReference>
<dbReference type="GO" id="GO:0005654">
    <property type="term" value="C:nucleoplasm"/>
    <property type="evidence" value="ECO:0000304"/>
    <property type="project" value="Reactome"/>
</dbReference>
<dbReference type="GO" id="GO:0005634">
    <property type="term" value="C:nucleus"/>
    <property type="evidence" value="ECO:0000318"/>
    <property type="project" value="GO_Central"/>
</dbReference>
<dbReference type="GO" id="GO:0003677">
    <property type="term" value="F:DNA binding"/>
    <property type="evidence" value="ECO:0000314"/>
    <property type="project" value="GDB"/>
</dbReference>
<dbReference type="GO" id="GO:0000976">
    <property type="term" value="F:transcription cis-regulatory region binding"/>
    <property type="evidence" value="ECO:0000314"/>
    <property type="project" value="UniProtKB"/>
</dbReference>
<dbReference type="GO" id="GO:0003713">
    <property type="term" value="F:transcription coactivator activity"/>
    <property type="evidence" value="ECO:0000314"/>
    <property type="project" value="UniProtKB"/>
</dbReference>
<dbReference type="GO" id="GO:0060612">
    <property type="term" value="P:adipose tissue development"/>
    <property type="evidence" value="ECO:0000250"/>
    <property type="project" value="UniProtKB"/>
</dbReference>
<dbReference type="GO" id="GO:0030325">
    <property type="term" value="P:adrenal gland development"/>
    <property type="evidence" value="ECO:0007669"/>
    <property type="project" value="Ensembl"/>
</dbReference>
<dbReference type="GO" id="GO:0048468">
    <property type="term" value="P:cell development"/>
    <property type="evidence" value="ECO:0007669"/>
    <property type="project" value="Ensembl"/>
</dbReference>
<dbReference type="GO" id="GO:1990830">
    <property type="term" value="P:cellular response to leukemia inhibitory factor"/>
    <property type="evidence" value="ECO:0007669"/>
    <property type="project" value="Ensembl"/>
</dbReference>
<dbReference type="GO" id="GO:0060325">
    <property type="term" value="P:face morphogenesis"/>
    <property type="evidence" value="ECO:0007669"/>
    <property type="project" value="Ensembl"/>
</dbReference>
<dbReference type="GO" id="GO:0045444">
    <property type="term" value="P:fat cell differentiation"/>
    <property type="evidence" value="ECO:0007669"/>
    <property type="project" value="Ensembl"/>
</dbReference>
<dbReference type="GO" id="GO:0060613">
    <property type="term" value="P:fat pad development"/>
    <property type="evidence" value="ECO:0007669"/>
    <property type="project" value="Ensembl"/>
</dbReference>
<dbReference type="GO" id="GO:0008585">
    <property type="term" value="P:female gonad development"/>
    <property type="evidence" value="ECO:0007669"/>
    <property type="project" value="Ensembl"/>
</dbReference>
<dbReference type="GO" id="GO:0010761">
    <property type="term" value="P:fibroblast migration"/>
    <property type="evidence" value="ECO:0007669"/>
    <property type="project" value="Ensembl"/>
</dbReference>
<dbReference type="GO" id="GO:0001822">
    <property type="term" value="P:kidney development"/>
    <property type="evidence" value="ECO:0007669"/>
    <property type="project" value="Ensembl"/>
</dbReference>
<dbReference type="GO" id="GO:0001889">
    <property type="term" value="P:liver development"/>
    <property type="evidence" value="ECO:0000304"/>
    <property type="project" value="UniProtKB"/>
</dbReference>
<dbReference type="GO" id="GO:0008584">
    <property type="term" value="P:male gonad development"/>
    <property type="evidence" value="ECO:0007669"/>
    <property type="project" value="Ensembl"/>
</dbReference>
<dbReference type="GO" id="GO:0035264">
    <property type="term" value="P:multicellular organism growth"/>
    <property type="evidence" value="ECO:0007669"/>
    <property type="project" value="Ensembl"/>
</dbReference>
<dbReference type="GO" id="GO:0048644">
    <property type="term" value="P:muscle organ morphogenesis"/>
    <property type="evidence" value="ECO:0007669"/>
    <property type="project" value="Ensembl"/>
</dbReference>
<dbReference type="GO" id="GO:0045892">
    <property type="term" value="P:negative regulation of DNA-templated transcription"/>
    <property type="evidence" value="ECO:0000304"/>
    <property type="project" value="GDB"/>
</dbReference>
<dbReference type="GO" id="GO:0000122">
    <property type="term" value="P:negative regulation of transcription by RNA polymerase II"/>
    <property type="evidence" value="ECO:0000314"/>
    <property type="project" value="NTNU_SB"/>
</dbReference>
<dbReference type="GO" id="GO:0048008">
    <property type="term" value="P:platelet-derived growth factor receptor signaling pathway"/>
    <property type="evidence" value="ECO:0007669"/>
    <property type="project" value="Ensembl"/>
</dbReference>
<dbReference type="GO" id="GO:0051091">
    <property type="term" value="P:positive regulation of DNA-binding transcription factor activity"/>
    <property type="evidence" value="ECO:0000314"/>
    <property type="project" value="UniProtKB"/>
</dbReference>
<dbReference type="GO" id="GO:0009791">
    <property type="term" value="P:post-embryonic development"/>
    <property type="evidence" value="ECO:0007669"/>
    <property type="project" value="Ensembl"/>
</dbReference>
<dbReference type="GO" id="GO:0006357">
    <property type="term" value="P:regulation of transcription by RNA polymerase II"/>
    <property type="evidence" value="ECO:0000318"/>
    <property type="project" value="GO_Central"/>
</dbReference>
<dbReference type="GO" id="GO:0060021">
    <property type="term" value="P:roof of mouth development"/>
    <property type="evidence" value="ECO:0007669"/>
    <property type="project" value="Ensembl"/>
</dbReference>
<dbReference type="GO" id="GO:0048705">
    <property type="term" value="P:skeletal system morphogenesis"/>
    <property type="evidence" value="ECO:0007669"/>
    <property type="project" value="Ensembl"/>
</dbReference>
<dbReference type="CDD" id="cd16885">
    <property type="entry name" value="ARID_ARID5B"/>
    <property type="match status" value="1"/>
</dbReference>
<dbReference type="FunFam" id="1.10.150.60:FF:000004">
    <property type="entry name" value="AT-rich interactive domain-containing protein 5B"/>
    <property type="match status" value="1"/>
</dbReference>
<dbReference type="Gene3D" id="1.10.150.60">
    <property type="entry name" value="ARID DNA-binding domain"/>
    <property type="match status" value="1"/>
</dbReference>
<dbReference type="InterPro" id="IPR051232">
    <property type="entry name" value="ARID/SWI1_ChromRemod"/>
</dbReference>
<dbReference type="InterPro" id="IPR030408">
    <property type="entry name" value="ARID5B_ARID/BRIGHT_DNA-bd"/>
</dbReference>
<dbReference type="InterPro" id="IPR001606">
    <property type="entry name" value="ARID_dom"/>
</dbReference>
<dbReference type="InterPro" id="IPR036431">
    <property type="entry name" value="ARID_dom_sf"/>
</dbReference>
<dbReference type="PANTHER" id="PTHR13964:SF37">
    <property type="entry name" value="AT-RICH INTERACTIVE DOMAIN-CONTAINING PROTEIN 5B"/>
    <property type="match status" value="1"/>
</dbReference>
<dbReference type="PANTHER" id="PTHR13964">
    <property type="entry name" value="RBP-RELATED"/>
    <property type="match status" value="1"/>
</dbReference>
<dbReference type="Pfam" id="PF01388">
    <property type="entry name" value="ARID"/>
    <property type="match status" value="1"/>
</dbReference>
<dbReference type="SMART" id="SM01014">
    <property type="entry name" value="ARID"/>
    <property type="match status" value="1"/>
</dbReference>
<dbReference type="SMART" id="SM00501">
    <property type="entry name" value="BRIGHT"/>
    <property type="match status" value="1"/>
</dbReference>
<dbReference type="SUPFAM" id="SSF46774">
    <property type="entry name" value="ARID-like"/>
    <property type="match status" value="1"/>
</dbReference>
<dbReference type="PROSITE" id="PS51011">
    <property type="entry name" value="ARID"/>
    <property type="match status" value="1"/>
</dbReference>
<protein>
    <recommendedName>
        <fullName>AT-rich interactive domain-containing protein 5B</fullName>
        <shortName>ARID domain-containing protein 5B</shortName>
    </recommendedName>
    <alternativeName>
        <fullName>MRF1-like protein</fullName>
    </alternativeName>
    <alternativeName>
        <fullName>Modulator recognition factor 2</fullName>
        <shortName>MRF-2</shortName>
    </alternativeName>
</protein>
<proteinExistence type="evidence at protein level"/>
<organism>
    <name type="scientific">Homo sapiens</name>
    <name type="common">Human</name>
    <dbReference type="NCBI Taxonomy" id="9606"/>
    <lineage>
        <taxon>Eukaryota</taxon>
        <taxon>Metazoa</taxon>
        <taxon>Chordata</taxon>
        <taxon>Craniata</taxon>
        <taxon>Vertebrata</taxon>
        <taxon>Euteleostomi</taxon>
        <taxon>Mammalia</taxon>
        <taxon>Eutheria</taxon>
        <taxon>Euarchontoglires</taxon>
        <taxon>Primates</taxon>
        <taxon>Haplorrhini</taxon>
        <taxon>Catarrhini</taxon>
        <taxon>Hominidae</taxon>
        <taxon>Homo</taxon>
    </lineage>
</organism>
<sequence length="1188" mass="132375">MEPNSLQWVGSPCGLHGPYIFYKAFQFHLEGKPRILSLGDFFFVRCTPKDPICIAELQLLWEERTSRQLLSSSKLYFLPEDTPQGRNSDHGEDEVIAVSEKVIVKLEDLVKWVHSDFSKWRCGFHAGPVKTEALGRNGQKEALLKYRQSTLNSGLNFKDVLKEKADLGEDEEETNVIVLSYPQYCRYRSMLKRIQDKPSSILTDQFALALGGIAVVSRNPQILYCRDTFDHPTLIENESICDEFAPNLKGRPRKKKPCPQRRDSFSGVKDSNNNSDGKAVAKVKCEARSALTKPKNNHNCKKVSNEEKPKVAIGEECRADEQAFLVALYKYMKERKTPIERIPYLGFKQINLWTMFQAAQKLGGYETITARRQWKHIYDELGGNPGSTSAATCTRRHYERLILPYERFIKGEEDKPLPPIKPRKQENSSQENENKTKVSGTKRIKHEIPKSKKEKENAPKPQDAAEVSSEQEKEQETLISQKSIPEPLPAADMKKKIEGYQEFSAKPLASRVDPEKDNETDQGSNSEKVAEEAGEKGPTPPLPSAPLAPEKDSALVPGASKQPLTSPSALVDSKQESKLCCFTESPESEPQEASFPSFPTTQPPLANQNETEDDKLPAMADYIANCTVKVDQLGSDDIHNALKQTPKVLVVQSFDMFKDKDLTGPMNENHGLNYTPLLYSRGNPGIMSPLAKKKLLSQVSGASLSSSYPYGSPPPLISKKKLIARDDLCSSLSQTHHGQSTDHMAVSRPSVIQHVQSFRSKPSEERKTINDIFKHEKLSRSDPHRCSFSKHHLNPLADSYVLKQEIQEGKDKLLEKRALPHSHMPSFLADFYSSPHLHSLYRHTEHHLHNEQTSKYPSRDMYRESENSSFPSHRHQEKLHVNYLTSLHLQDKKSAAAEAPTDDQPTDLSLPKNPHKPTGKVLGLAHSTTGPQESKGISQFQVLGSQSRDCHPKACRVSPMTMSGPKKYPESLSRSGKPHHVRLENFRKMEGMVHPILHRKMSPQNIGAARPIKRSLEDLDLVIAGKKARAVSPLDPSKEVSGKEKASEQESEGSKAAHGGHSGGGSEGHKLPLSSPIFPGLYSGSLCNSGLNSRLPAGYSHSLQYLKNQTVLSPLMQPLAFHSLVMQRGIFTSPTNSQQLYRHLAAATPVGSSYGDLLHNSIYPLAAINPQAAFPSSQLSSVHPSTKL</sequence>
<gene>
    <name type="primary">ARID5B</name>
    <name type="synonym">DESRT</name>
    <name type="synonym">MRF2</name>
</gene>
<comment type="function">
    <text evidence="10">Transcription coactivator that binds to the 5'-AATA[CT]-3' core sequence and plays a key role in adipogenesis and liver development. Acts by forming a complex with phosphorylated PHF2, which mediates demethylation at Lys-336, leading to target the PHF2-ARID5B complex to target promoters, where PHF2 mediates demethylation of dimethylated 'Lys-9' of histone H3 (H3K9me2), followed by transcription activation of target genes. The PHF2-ARID5B complex acts as a coactivator of HNF4A in liver. Required for adipogenesis: regulates triglyceride metabolism in adipocytes by regulating expression of adipogenic genes. Overexpression leads to induction of smooth muscle marker genes, suggesting that it may also act as a regulator of smooth muscle cell differentiation and proliferation. Represses the cytomegalovirus enhancer.</text>
</comment>
<comment type="interaction">
    <interactant intactId="EBI-1210388">
        <id>Q14865</id>
    </interactant>
    <interactant intactId="EBI-301834">
        <id>Q13547</id>
        <label>HDAC1</label>
    </interactant>
    <organismsDiffer>false</organismsDiffer>
    <experiments>9</experiments>
</comment>
<comment type="subcellular location">
    <subcellularLocation>
        <location evidence="1">Nucleus</location>
    </subcellularLocation>
</comment>
<comment type="alternative products">
    <event type="alternative splicing"/>
    <isoform>
        <id>Q14865-1</id>
        <name>1</name>
        <sequence type="displayed"/>
    </isoform>
    <isoform>
        <id>Q14865-2</id>
        <name>2</name>
        <sequence type="described" ref="VSP_009355 VSP_009356"/>
    </isoform>
    <isoform>
        <id>Q14865-3</id>
        <name>3</name>
        <sequence type="described" ref="VSP_041560 VSP_041561"/>
    </isoform>
</comment>
<comment type="tissue specificity">
    <text evidence="10">Widely expressed, including in liver (at protein level).</text>
</comment>
<comment type="domain">
    <text>The ARID domain mediates the interaction with DNA.</text>
</comment>
<comment type="PTM">
    <text evidence="10">Methylation at Lys-336 prevents DNA-binding. Demethylation by PHF2 promotes recruitment of the PHF2-ARID5B complex to promoters.</text>
</comment>
<comment type="disease">
    <text>Defects in ARID5B may be a cause of susceptibility to coronary atherosclerosis in the Japanese population.</text>
</comment>
<comment type="disease" evidence="3 4 5 6 7 8 9">
    <disease id="DI-03076">
        <name>Leukemia, acute lymphoblastic</name>
        <acronym>ALL</acronym>
        <description>A subtype of acute leukemia, a cancer of the white blood cells. ALL is a malignant disease of bone marrow and the most common malignancy diagnosed in children. The malignant cells are lymphoid precursor cells (lymphoblasts) that are arrested in an early stage of development. The lymphoblasts replace the normal marrow elements, resulting in a marked decrease in the production of normal blood cells. Consequently, anemia, thrombocytopenia, and neutropenia occur to varying degrees. The lymphoblasts also proliferate in organs other than the marrow, particularly the liver, spleen, and lymphnodes.</description>
        <dbReference type="MIM" id="613065"/>
    </disease>
    <text>Disease susceptibility is associated with variants affecting the gene represented in this entry.</text>
</comment>
<comment type="similarity">
    <text evidence="13">Belongs to the ARID5B family.</text>
</comment>
<comment type="sequence caution" evidence="13">
    <conflict type="miscellaneous discrepancy">
        <sequence resource="EMBL-CDS" id="AAH15120"/>
    </conflict>
    <text>Contaminating sequence. Potential poly-A sequence.</text>
</comment>
<comment type="sequence caution" evidence="13">
    <conflict type="erroneous initiation">
        <sequence resource="EMBL-CDS" id="AAH36831"/>
    </conflict>
    <text>Extended N-terminus.</text>
</comment>
<comment type="sequence caution" evidence="13">
    <conflict type="miscellaneous discrepancy">
        <sequence resource="EMBL-CDS" id="AAH66345"/>
    </conflict>
    <text>Contaminating sequence. Potential poly-A sequence.</text>
</comment>
<comment type="sequence caution" evidence="13">
    <conflict type="miscellaneous discrepancy">
        <sequence resource="EMBL-CDS" id="AAI07801"/>
    </conflict>
    <text>Contaminating sequence. Potential poly-A sequence.</text>
</comment>
<comment type="sequence caution" evidence="13">
    <conflict type="miscellaneous discrepancy">
        <sequence resource="EMBL-CDS" id="BAB15012"/>
    </conflict>
    <text>Contaminating sequence. Potential poly-A sequence.</text>
</comment>
<keyword id="KW-0002">3D-structure</keyword>
<keyword id="KW-0010">Activator</keyword>
<keyword id="KW-0025">Alternative splicing</keyword>
<keyword id="KW-0238">DNA-binding</keyword>
<keyword id="KW-1017">Isopeptide bond</keyword>
<keyword id="KW-0488">Methylation</keyword>
<keyword id="KW-0539">Nucleus</keyword>
<keyword id="KW-0597">Phosphoprotein</keyword>
<keyword id="KW-1267">Proteomics identification</keyword>
<keyword id="KW-1185">Reference proteome</keyword>
<keyword id="KW-0804">Transcription</keyword>
<keyword id="KW-0805">Transcription regulation</keyword>
<keyword id="KW-0832">Ubl conjugation</keyword>